<name>TMAR_YERPP</name>
<dbReference type="EMBL" id="CP000668">
    <property type="protein sequence ID" value="ABP39805.1"/>
    <property type="molecule type" value="Genomic_DNA"/>
</dbReference>
<dbReference type="SMR" id="A4TKJ3"/>
<dbReference type="KEGG" id="ypp:YPDSF_1416"/>
<dbReference type="PATRIC" id="fig|386656.14.peg.2371"/>
<dbReference type="GO" id="GO:0005829">
    <property type="term" value="C:cytosol"/>
    <property type="evidence" value="ECO:0007669"/>
    <property type="project" value="TreeGrafter"/>
</dbReference>
<dbReference type="HAMAP" id="MF_00683">
    <property type="entry name" value="Pole_loc_TmaR"/>
    <property type="match status" value="1"/>
</dbReference>
<dbReference type="InterPro" id="IPR007458">
    <property type="entry name" value="DUF496"/>
</dbReference>
<dbReference type="InterPro" id="IPR053375">
    <property type="entry name" value="UPF0265"/>
</dbReference>
<dbReference type="NCBIfam" id="NF003844">
    <property type="entry name" value="PRK05423.1"/>
    <property type="match status" value="1"/>
</dbReference>
<dbReference type="NCBIfam" id="NF040881">
    <property type="entry name" value="PTS_reg_TmaR"/>
    <property type="match status" value="1"/>
</dbReference>
<dbReference type="PANTHER" id="PTHR39591">
    <property type="entry name" value="UPF0265 PROTEIN YEEX"/>
    <property type="match status" value="1"/>
</dbReference>
<dbReference type="PANTHER" id="PTHR39591:SF1">
    <property type="entry name" value="UPF0265 PROTEIN YEEX"/>
    <property type="match status" value="1"/>
</dbReference>
<dbReference type="Pfam" id="PF04363">
    <property type="entry name" value="DUF496"/>
    <property type="match status" value="1"/>
</dbReference>
<dbReference type="PIRSF" id="PIRSF028773">
    <property type="entry name" value="UCP028773"/>
    <property type="match status" value="1"/>
</dbReference>
<keyword id="KW-0175">Coiled coil</keyword>
<keyword id="KW-0963">Cytoplasm</keyword>
<proteinExistence type="inferred from homology"/>
<comment type="function">
    <text evidence="1">Pole-localizer protein involved in the regulation of several cellular processes.</text>
</comment>
<comment type="subcellular location">
    <subcellularLocation>
        <location evidence="1">Cytoplasm</location>
    </subcellularLocation>
</comment>
<comment type="similarity">
    <text evidence="1">Belongs to the pole-localizer TmaR family.</text>
</comment>
<feature type="chain" id="PRO_1000044942" description="Pole-localizer protein TmaR">
    <location>
        <begin position="1"/>
        <end position="105"/>
    </location>
</feature>
<feature type="coiled-coil region" evidence="1">
    <location>
        <begin position="22"/>
        <end position="42"/>
    </location>
</feature>
<feature type="coiled-coil region" evidence="1">
    <location>
        <begin position="77"/>
        <end position="104"/>
    </location>
</feature>
<gene>
    <name evidence="1" type="primary">tmaR</name>
    <name type="ordered locus">YPDSF_1416</name>
</gene>
<reference key="1">
    <citation type="submission" date="2007-02" db="EMBL/GenBank/DDBJ databases">
        <title>Complete sequence of chromosome of Yersinia pestis Pestoides F.</title>
        <authorList>
            <consortium name="US DOE Joint Genome Institute"/>
            <person name="Copeland A."/>
            <person name="Lucas S."/>
            <person name="Lapidus A."/>
            <person name="Barry K."/>
            <person name="Detter J.C."/>
            <person name="Glavina del Rio T."/>
            <person name="Hammon N."/>
            <person name="Israni S."/>
            <person name="Dalin E."/>
            <person name="Tice H."/>
            <person name="Pitluck S."/>
            <person name="Di Bartolo G."/>
            <person name="Chain P."/>
            <person name="Malfatti S."/>
            <person name="Shin M."/>
            <person name="Vergez L."/>
            <person name="Schmutz J."/>
            <person name="Larimer F."/>
            <person name="Land M."/>
            <person name="Hauser L."/>
            <person name="Worsham P."/>
            <person name="Chu M."/>
            <person name="Bearden S."/>
            <person name="Garcia E."/>
            <person name="Richardson P."/>
        </authorList>
    </citation>
    <scope>NUCLEOTIDE SEQUENCE [LARGE SCALE GENOMIC DNA]</scope>
    <source>
        <strain>Pestoides F</strain>
    </source>
</reference>
<evidence type="ECO:0000255" key="1">
    <source>
        <dbReference type="HAMAP-Rule" id="MF_00683"/>
    </source>
</evidence>
<organism>
    <name type="scientific">Yersinia pestis (strain Pestoides F)</name>
    <dbReference type="NCBI Taxonomy" id="386656"/>
    <lineage>
        <taxon>Bacteria</taxon>
        <taxon>Pseudomonadati</taxon>
        <taxon>Pseudomonadota</taxon>
        <taxon>Gammaproteobacteria</taxon>
        <taxon>Enterobacterales</taxon>
        <taxon>Yersiniaceae</taxon>
        <taxon>Yersinia</taxon>
    </lineage>
</organism>
<protein>
    <recommendedName>
        <fullName evidence="1">Pole-localizer protein TmaR</fullName>
    </recommendedName>
</protein>
<accession>A4TKJ3</accession>
<sequence length="105" mass="12461">MDNASKPTFQDVLEFVRMFRRKNKLQREIVDNEKKIRDNQKRVLLLDNLSEYIKPGMSIEEVQAIIANMRGDYEDRVDDYIIKNADLSKERRELSKKLKAMGEVK</sequence>